<proteinExistence type="evidence at protein level"/>
<comment type="function">
    <text evidence="1 5">Dual chitinase/transglycosylase that plays a role in cell wall architecture (PubMed:33846308). Chitinase and transglycosylase activities are coupled (By similarity). Required for the polysaccharide cross-linking at the septa and the cell wall (By similarity). More specifically, transfers chitin to 1,6-beta-glucan in the cell wall (By similarity).</text>
</comment>
<comment type="catalytic activity">
    <reaction evidence="1">
        <text>Random endo-hydrolysis of N-acetyl-beta-D-glucosaminide (1-&gt;4)-beta-linkages in chitin and chitodextrins.</text>
        <dbReference type="EC" id="3.2.1.14"/>
    </reaction>
</comment>
<comment type="subunit">
    <text evidence="5">Forms homodimers as well as heterodimers with other crh protein members crh1 and crh2 (PubMed:33846308). Dimerization may be necessary for the transglycosylation activity (PubMed:33846308).</text>
</comment>
<comment type="subcellular location">
    <subcellularLocation>
        <location evidence="2">Cell membrane</location>
        <topology evidence="2">Lipid-anchor</topology>
        <topology evidence="2">GPI-anchor</topology>
    </subcellularLocation>
</comment>
<comment type="similarity">
    <text evidence="7">Belongs to the glycosyl hydrolase 16 family. CRH1 subfamily.</text>
</comment>
<dbReference type="EC" id="3.2.1.14" evidence="1"/>
<dbReference type="EC" id="2.4.-.-" evidence="1"/>
<dbReference type="EMBL" id="CP009817">
    <property type="protein sequence ID" value="ATZ56526.1"/>
    <property type="molecule type" value="Genomic_DNA"/>
</dbReference>
<dbReference type="RefSeq" id="XP_001556330.1">
    <property type="nucleotide sequence ID" value="XM_001556280.2"/>
</dbReference>
<dbReference type="EnsemblFungi" id="Bcin13g03640.1">
    <property type="protein sequence ID" value="Bcin13p03640.1"/>
    <property type="gene ID" value="Bcin13g03640"/>
</dbReference>
<dbReference type="GeneID" id="5436885"/>
<dbReference type="KEGG" id="bfu:BCIN_13g03640"/>
<dbReference type="VEuPathDB" id="FungiDB:Bcin13g03640"/>
<dbReference type="OMA" id="WNATANQ"/>
<dbReference type="OrthoDB" id="4781at2759"/>
<dbReference type="Proteomes" id="UP000001798">
    <property type="component" value="Chromosome bcin13"/>
</dbReference>
<dbReference type="GO" id="GO:0000144">
    <property type="term" value="C:cellular bud neck septin ring"/>
    <property type="evidence" value="ECO:0007669"/>
    <property type="project" value="EnsemblFungi"/>
</dbReference>
<dbReference type="GO" id="GO:0009277">
    <property type="term" value="C:fungal-type cell wall"/>
    <property type="evidence" value="ECO:0007669"/>
    <property type="project" value="EnsemblFungi"/>
</dbReference>
<dbReference type="GO" id="GO:0098552">
    <property type="term" value="C:side of membrane"/>
    <property type="evidence" value="ECO:0007669"/>
    <property type="project" value="UniProtKB-KW"/>
</dbReference>
<dbReference type="GO" id="GO:0016757">
    <property type="term" value="F:glycosyltransferase activity"/>
    <property type="evidence" value="ECO:0007669"/>
    <property type="project" value="EnsemblFungi"/>
</dbReference>
<dbReference type="GO" id="GO:0004553">
    <property type="term" value="F:hydrolase activity, hydrolyzing O-glycosyl compounds"/>
    <property type="evidence" value="ECO:0007669"/>
    <property type="project" value="UniProtKB-UniRule"/>
</dbReference>
<dbReference type="GO" id="GO:0005975">
    <property type="term" value="P:carbohydrate metabolic process"/>
    <property type="evidence" value="ECO:0007669"/>
    <property type="project" value="InterPro"/>
</dbReference>
<dbReference type="GO" id="GO:0006030">
    <property type="term" value="P:chitin metabolic process"/>
    <property type="evidence" value="ECO:0007669"/>
    <property type="project" value="EnsemblFungi"/>
</dbReference>
<dbReference type="GO" id="GO:0031505">
    <property type="term" value="P:fungal-type cell wall organization"/>
    <property type="evidence" value="ECO:0007669"/>
    <property type="project" value="EnsemblFungi"/>
</dbReference>
<dbReference type="CDD" id="cd06923">
    <property type="entry name" value="ChtBD1_GH16"/>
    <property type="match status" value="1"/>
</dbReference>
<dbReference type="FunFam" id="2.60.120.200:FF:000159">
    <property type="entry name" value="Glycosidase"/>
    <property type="match status" value="1"/>
</dbReference>
<dbReference type="Gene3D" id="2.60.120.200">
    <property type="match status" value="1"/>
</dbReference>
<dbReference type="InterPro" id="IPR013320">
    <property type="entry name" value="ConA-like_dom_sf"/>
</dbReference>
<dbReference type="InterPro" id="IPR000757">
    <property type="entry name" value="GH16"/>
</dbReference>
<dbReference type="InterPro" id="IPR017168">
    <property type="entry name" value="Glyco_hydro_16_CRH1_prd"/>
</dbReference>
<dbReference type="InterPro" id="IPR050546">
    <property type="entry name" value="Glycosyl_Hydrlase_16"/>
</dbReference>
<dbReference type="PANTHER" id="PTHR10963:SF22">
    <property type="entry name" value="GLYCOSIDASE CRH2-RELATED"/>
    <property type="match status" value="1"/>
</dbReference>
<dbReference type="PANTHER" id="PTHR10963">
    <property type="entry name" value="GLYCOSYL HYDROLASE-RELATED"/>
    <property type="match status" value="1"/>
</dbReference>
<dbReference type="Pfam" id="PF00722">
    <property type="entry name" value="Glyco_hydro_16"/>
    <property type="match status" value="1"/>
</dbReference>
<dbReference type="PIRSF" id="PIRSF037299">
    <property type="entry name" value="Glycosidase_CRH1_prd"/>
    <property type="match status" value="1"/>
</dbReference>
<dbReference type="SUPFAM" id="SSF49899">
    <property type="entry name" value="Concanavalin A-like lectins/glucanases"/>
    <property type="match status" value="1"/>
</dbReference>
<dbReference type="PROSITE" id="PS51762">
    <property type="entry name" value="GH16_2"/>
    <property type="match status" value="1"/>
</dbReference>
<dbReference type="PROSITE" id="PS51257">
    <property type="entry name" value="PROKAR_LIPOPROTEIN"/>
    <property type="match status" value="1"/>
</dbReference>
<name>CRH3_BOTFB</name>
<gene>
    <name evidence="6" type="primary">crh3</name>
    <name type="ORF">BCIN_13g03640</name>
</gene>
<organism>
    <name type="scientific">Botryotinia fuckeliana (strain B05.10)</name>
    <name type="common">Noble rot fungus</name>
    <name type="synonym">Botrytis cinerea</name>
    <dbReference type="NCBI Taxonomy" id="332648"/>
    <lineage>
        <taxon>Eukaryota</taxon>
        <taxon>Fungi</taxon>
        <taxon>Dikarya</taxon>
        <taxon>Ascomycota</taxon>
        <taxon>Pezizomycotina</taxon>
        <taxon>Leotiomycetes</taxon>
        <taxon>Helotiales</taxon>
        <taxon>Sclerotiniaceae</taxon>
        <taxon>Botrytis</taxon>
    </lineage>
</organism>
<accession>A0A384K116</accession>
<keyword id="KW-1003">Cell membrane</keyword>
<keyword id="KW-0961">Cell wall biogenesis/degradation</keyword>
<keyword id="KW-1015">Disulfide bond</keyword>
<keyword id="KW-0325">Glycoprotein</keyword>
<keyword id="KW-0326">Glycosidase</keyword>
<keyword id="KW-0328">Glycosyltransferase</keyword>
<keyword id="KW-0336">GPI-anchor</keyword>
<keyword id="KW-0378">Hydrolase</keyword>
<keyword id="KW-0449">Lipoprotein</keyword>
<keyword id="KW-0472">Membrane</keyword>
<keyword id="KW-1185">Reference proteome</keyword>
<keyword id="KW-0732">Signal</keyword>
<keyword id="KW-0808">Transferase</keyword>
<sequence length="444" mass="46296">MVGKSTLLSVLASASVAFAACSLDSHCPEETPCCSQYGECGTGAYCLGGCDPRMSFSLESCVPEPVCESASYTFTSMDGITSNTKYLGDASKSNWVYSGSPVIYNDNVLLTMSANSVGTVMASSTYMWYGNVKAKFKTSRGQGVITAFILFSDVKDEIDYEFVGSELTTAQSNYYFQGITNYDNELNITLSDTYANYHEYEIDWTPDEITWLVDGQVGRTKKRADTWNATANQWNFPQTPARVQLSLWPGGLASNGAGTIAWAGGEIDWNSEDIQNNGYYYAAFESVDISCYNAKSAPGTNSGKSYYYNSVLGTNNTVIDSKNATILSSLLATGTNMTAGESAAASGSTAASTAATVPGLTGSGGGGVGDNHSDDGSSSSDSSSGSATSSSSGSSSTGSSGFSQGDGSTSTSKSSADSLVANQERVLKGSLFAGIVAVVAMMAL</sequence>
<feature type="signal peptide" evidence="2">
    <location>
        <begin position="1"/>
        <end position="19"/>
    </location>
</feature>
<feature type="chain" id="PRO_5016674062" description="Crh-like protein 3" evidence="2">
    <location>
        <begin position="20"/>
        <end position="415"/>
    </location>
</feature>
<feature type="propeptide" id="PRO_0000462228" description="Removed in mature form" evidence="2">
    <location>
        <begin position="416"/>
        <end position="444"/>
    </location>
</feature>
<feature type="domain" description="GH16" evidence="4">
    <location>
        <begin position="57"/>
        <end position="271"/>
    </location>
</feature>
<feature type="active site" description="Nucleophile" evidence="8">
    <location>
        <position position="157"/>
    </location>
</feature>
<feature type="active site" description="Proton donor" evidence="8">
    <location>
        <position position="161"/>
    </location>
</feature>
<feature type="binding site" evidence="1">
    <location>
        <position position="161"/>
    </location>
    <ligand>
        <name>chitin</name>
        <dbReference type="ChEBI" id="CHEBI:17029"/>
    </ligand>
</feature>
<feature type="binding site" evidence="1">
    <location>
        <position position="248"/>
    </location>
    <ligand>
        <name>chitin</name>
        <dbReference type="ChEBI" id="CHEBI:17029"/>
    </ligand>
</feature>
<feature type="binding site" evidence="1">
    <location>
        <position position="259"/>
    </location>
    <ligand>
        <name>chitin</name>
        <dbReference type="ChEBI" id="CHEBI:17029"/>
    </ligand>
</feature>
<feature type="lipid moiety-binding region" description="GPI-anchor amidated serine" evidence="2">
    <location>
        <position position="415"/>
    </location>
</feature>
<feature type="glycosylation site" description="N-linked (GlcNAc...) asparagine" evidence="3">
    <location>
        <position position="187"/>
    </location>
</feature>
<feature type="glycosylation site" description="N-linked (GlcNAc...) asparagine" evidence="3">
    <location>
        <position position="228"/>
    </location>
</feature>
<feature type="glycosylation site" description="N-linked (GlcNAc...) asparagine" evidence="3">
    <location>
        <position position="315"/>
    </location>
</feature>
<feature type="glycosylation site" description="N-linked (GlcNAc...) asparagine" evidence="3">
    <location>
        <position position="323"/>
    </location>
</feature>
<feature type="glycosylation site" description="N-linked (GlcNAc...) asparagine" evidence="3">
    <location>
        <position position="336"/>
    </location>
</feature>
<feature type="glycosylation site" description="N-linked (GlcNAc...) asparagine" evidence="3">
    <location>
        <position position="371"/>
    </location>
</feature>
<feature type="disulfide bond" evidence="1">
    <location>
        <begin position="27"/>
        <end position="34"/>
    </location>
</feature>
<evidence type="ECO:0000250" key="1">
    <source>
        <dbReference type="UniProtKB" id="Q8J0P4"/>
    </source>
</evidence>
<evidence type="ECO:0000255" key="2"/>
<evidence type="ECO:0000255" key="3">
    <source>
        <dbReference type="PROSITE-ProRule" id="PRU00498"/>
    </source>
</evidence>
<evidence type="ECO:0000255" key="4">
    <source>
        <dbReference type="PROSITE-ProRule" id="PRU01098"/>
    </source>
</evidence>
<evidence type="ECO:0000269" key="5">
    <source>
    </source>
</evidence>
<evidence type="ECO:0000303" key="6">
    <source>
    </source>
</evidence>
<evidence type="ECO:0000305" key="7"/>
<evidence type="ECO:0000305" key="8">
    <source>
    </source>
</evidence>
<protein>
    <recommendedName>
        <fullName evidence="6">Crh-like protein 3</fullName>
    </recommendedName>
    <domain>
        <recommendedName>
            <fullName evidence="1">Chitinase crh3</fullName>
            <ecNumber evidence="1">3.2.1.14</ecNumber>
        </recommendedName>
    </domain>
    <domain>
        <recommendedName>
            <fullName evidence="1">Chitin transglycosylase crh3</fullName>
            <ecNumber evidence="1">2.4.-.-</ecNumber>
        </recommendedName>
    </domain>
</protein>
<reference key="1">
    <citation type="journal article" date="2011" name="PLoS Genet.">
        <title>Genomic analysis of the necrotrophic fungal pathogens Sclerotinia sclerotiorum and Botrytis cinerea.</title>
        <authorList>
            <person name="Amselem J."/>
            <person name="Cuomo C.A."/>
            <person name="van Kan J.A.L."/>
            <person name="Viaud M."/>
            <person name="Benito E.P."/>
            <person name="Couloux A."/>
            <person name="Coutinho P.M."/>
            <person name="de Vries R.P."/>
            <person name="Dyer P.S."/>
            <person name="Fillinger S."/>
            <person name="Fournier E."/>
            <person name="Gout L."/>
            <person name="Hahn M."/>
            <person name="Kohn L."/>
            <person name="Lapalu N."/>
            <person name="Plummer K.M."/>
            <person name="Pradier J.-M."/>
            <person name="Quevillon E."/>
            <person name="Sharon A."/>
            <person name="Simon A."/>
            <person name="ten Have A."/>
            <person name="Tudzynski B."/>
            <person name="Tudzynski P."/>
            <person name="Wincker P."/>
            <person name="Andrew M."/>
            <person name="Anthouard V."/>
            <person name="Beever R.E."/>
            <person name="Beffa R."/>
            <person name="Benoit I."/>
            <person name="Bouzid O."/>
            <person name="Brault B."/>
            <person name="Chen Z."/>
            <person name="Choquer M."/>
            <person name="Collemare J."/>
            <person name="Cotton P."/>
            <person name="Danchin E.G."/>
            <person name="Da Silva C."/>
            <person name="Gautier A."/>
            <person name="Giraud C."/>
            <person name="Giraud T."/>
            <person name="Gonzalez C."/>
            <person name="Grossetete S."/>
            <person name="Gueldener U."/>
            <person name="Henrissat B."/>
            <person name="Howlett B.J."/>
            <person name="Kodira C."/>
            <person name="Kretschmer M."/>
            <person name="Lappartient A."/>
            <person name="Leroch M."/>
            <person name="Levis C."/>
            <person name="Mauceli E."/>
            <person name="Neuveglise C."/>
            <person name="Oeser B."/>
            <person name="Pearson M."/>
            <person name="Poulain J."/>
            <person name="Poussereau N."/>
            <person name="Quesneville H."/>
            <person name="Rascle C."/>
            <person name="Schumacher J."/>
            <person name="Segurens B."/>
            <person name="Sexton A."/>
            <person name="Silva E."/>
            <person name="Sirven C."/>
            <person name="Soanes D.M."/>
            <person name="Talbot N.J."/>
            <person name="Templeton M."/>
            <person name="Yandava C."/>
            <person name="Yarden O."/>
            <person name="Zeng Q."/>
            <person name="Rollins J.A."/>
            <person name="Lebrun M.-H."/>
            <person name="Dickman M."/>
        </authorList>
    </citation>
    <scope>NUCLEOTIDE SEQUENCE [LARGE SCALE GENOMIC DNA]</scope>
    <source>
        <strain>B05.10</strain>
    </source>
</reference>
<reference key="2">
    <citation type="journal article" date="2012" name="Eukaryot. Cell">
        <title>Genome update of Botrytis cinerea strains B05.10 and T4.</title>
        <authorList>
            <person name="Staats M."/>
            <person name="van Kan J.A.L."/>
        </authorList>
    </citation>
    <scope>NUCLEOTIDE SEQUENCE [LARGE SCALE GENOMIC DNA]</scope>
    <scope>GENOME REANNOTATION</scope>
    <source>
        <strain>B05.10</strain>
    </source>
</reference>
<reference key="3">
    <citation type="journal article" date="2017" name="Mol. Plant Pathol.">
        <title>A gapless genome sequence of the fungus Botrytis cinerea.</title>
        <authorList>
            <person name="van Kan J.A.L."/>
            <person name="Stassen J.H.M."/>
            <person name="Mosbach A."/>
            <person name="van der Lee T.A.J."/>
            <person name="Faino L."/>
            <person name="Farmer A.D."/>
            <person name="Papasotiriou D.G."/>
            <person name="Zhou S."/>
            <person name="Seidl M.F."/>
            <person name="Cottam E."/>
            <person name="Edel D."/>
            <person name="Hahn M."/>
            <person name="Schwartz D.C."/>
            <person name="Dietrich R.A."/>
            <person name="Widdison S."/>
            <person name="Scalliet G."/>
        </authorList>
    </citation>
    <scope>NUCLEOTIDE SEQUENCE [LARGE SCALE GENOMIC DNA]</scope>
    <scope>GENOME REANNOTATION</scope>
    <source>
        <strain>B05.10</strain>
    </source>
</reference>
<reference key="4">
    <citation type="journal article" date="2021" name="Nat. Commun.">
        <title>The Botrytis cinerea Crh1 transglycosylase is a cytoplasmic effector triggering plant cell death and defense response.</title>
        <authorList>
            <person name="Bi K."/>
            <person name="Scalschi L."/>
            <person name="Jaiswal N."/>
            <person name="Mengiste T."/>
            <person name="Fried R."/>
            <person name="Sanz A.B."/>
            <person name="Arroyo J."/>
            <person name="Zhu W."/>
            <person name="Masrati G."/>
            <person name="Sharon A."/>
        </authorList>
    </citation>
    <scope>FUNCTION</scope>
    <scope>SUBUNIT</scope>
    <scope>INTERACTION WITH CRH1 AND CRH2</scope>
</reference>